<sequence>MSSVPIDSVQAAQQVVSTKIKDKSWIMPTDPAEFLQQIAYQSQLLACLHWLGEFQILACVPLSGSVPIKDVADLAGVPVSQLAHVIRFMATAGFMKEPRRGEVAHTPQSAAFVTDPSFLDAGIFLAQVSARSARKMAQNSAISTLMGGDGANNGSDFDNGELLKSTSESPRVQREVTAYLHYVVNEVSDTANLLAQLDWRKLGSSSVVEIRADRIYPASLVLTELHSTPRFTVQTFQEDSVEQGTAVTTTATTSSSFISKSSEEPSPKRIKPGITYQKRSLGSPQVVTDATMYVMRLERPHSTSVQRSILDEGQIVSELRAHLGVLKHNSNATLILIGPLLPEAGAIDAKAEMVVRFRDLSLNQLTSEREMEVGELVDIIGDVQDESGCLVVVNKLYSRTSSTVALEVRYELYNYRKG</sequence>
<organism>
    <name type="scientific">Pestalotiopsis fici (strain W106-1 / CGMCC3.15140)</name>
    <dbReference type="NCBI Taxonomy" id="1229662"/>
    <lineage>
        <taxon>Eukaryota</taxon>
        <taxon>Fungi</taxon>
        <taxon>Dikarya</taxon>
        <taxon>Ascomycota</taxon>
        <taxon>Pezizomycotina</taxon>
        <taxon>Sordariomycetes</taxon>
        <taxon>Xylariomycetidae</taxon>
        <taxon>Amphisphaeriales</taxon>
        <taxon>Sporocadaceae</taxon>
        <taxon>Pestalotiopsis</taxon>
    </lineage>
</organism>
<keyword id="KW-0238">DNA-binding</keyword>
<keyword id="KW-0539">Nucleus</keyword>
<keyword id="KW-1185">Reference proteome</keyword>
<keyword id="KW-0804">Transcription</keyword>
<keyword id="KW-0805">Transcription regulation</keyword>
<accession>A0A067XNJ0</accession>
<accession>W3WSV9</accession>
<protein>
    <recommendedName>
        <fullName evidence="2">Pestheic acid cluster transcriptional regulator 1</fullName>
    </recommendedName>
</protein>
<evidence type="ECO:0000256" key="1">
    <source>
        <dbReference type="SAM" id="MobiDB-lite"/>
    </source>
</evidence>
<evidence type="ECO:0000303" key="2">
    <source>
    </source>
</evidence>
<evidence type="ECO:0000305" key="3"/>
<evidence type="ECO:0000305" key="4">
    <source>
    </source>
</evidence>
<reference key="1">
    <citation type="journal article" date="2014" name="ChemBioChem">
        <title>Identification of the first diphenyl ether gene cluster for pestheic acid biosynthesis in plant endophyte Pestalotiopsis fici.</title>
        <authorList>
            <person name="Xu X."/>
            <person name="Liu L."/>
            <person name="Zhang F."/>
            <person name="Wang W."/>
            <person name="Li J."/>
            <person name="Guo L."/>
            <person name="Che Y."/>
            <person name="Liu G."/>
        </authorList>
    </citation>
    <scope>NUCLEOTIDE SEQUENCE [GENOMIC DNA]</scope>
    <scope>FUNCTION</scope>
    <source>
        <strain>W106-1 / CGMCC3.15140</strain>
    </source>
</reference>
<reference key="2">
    <citation type="journal article" date="2015" name="BMC Genomics">
        <title>Genomic and transcriptomic analysis of the endophytic fungus Pestalotiopsis fici reveals its lifestyle and high potential for synthesis of natural products.</title>
        <authorList>
            <person name="Wang X."/>
            <person name="Zhang X."/>
            <person name="Liu L."/>
            <person name="Xiang M."/>
            <person name="Wang W."/>
            <person name="Sun X."/>
            <person name="Che Y."/>
            <person name="Guo L."/>
            <person name="Liu G."/>
            <person name="Guo L."/>
            <person name="Wang C."/>
            <person name="Yin W.B."/>
            <person name="Stadler M."/>
            <person name="Zhang X."/>
            <person name="Liu X."/>
        </authorList>
    </citation>
    <scope>NUCLEOTIDE SEQUENCE [LARGE SCALE GENOMIC DNA]</scope>
    <source>
        <strain>W106-1 / CGMCC3.15140</strain>
    </source>
</reference>
<name>PTAR1_PESFW</name>
<comment type="function">
    <text evidence="4">Transcription factor that, with ptaR2 and ptaR3, coregulates the expression of the gene cluster that mediates the biosynthesis of pestheic acid, a diphenyl ether which is a biosynthetic precursor of the unique chloropupukeananes (PubMed:24302702).</text>
</comment>
<comment type="subcellular location">
    <subcellularLocation>
        <location evidence="3">Nucleus</location>
    </subcellularLocation>
</comment>
<dbReference type="EMBL" id="KC145148">
    <property type="protein sequence ID" value="AGO59050.1"/>
    <property type="molecule type" value="Genomic_DNA"/>
</dbReference>
<dbReference type="EMBL" id="KI912116">
    <property type="protein sequence ID" value="ETS76958.1"/>
    <property type="molecule type" value="Genomic_DNA"/>
</dbReference>
<dbReference type="RefSeq" id="XP_007837604.1">
    <property type="nucleotide sequence ID" value="XM_007839413.1"/>
</dbReference>
<dbReference type="SMR" id="A0A067XNJ0"/>
<dbReference type="STRING" id="1229662.A0A067XNJ0"/>
<dbReference type="GeneID" id="19275845"/>
<dbReference type="KEGG" id="pfy:PFICI_10832"/>
<dbReference type="eggNOG" id="KOG3178">
    <property type="taxonomic scope" value="Eukaryota"/>
</dbReference>
<dbReference type="InParanoid" id="A0A067XNJ0"/>
<dbReference type="OMA" id="LLACIQW"/>
<dbReference type="OrthoDB" id="2410195at2759"/>
<dbReference type="Proteomes" id="UP000030651">
    <property type="component" value="Unassembled WGS sequence"/>
</dbReference>
<dbReference type="GO" id="GO:0005634">
    <property type="term" value="C:nucleus"/>
    <property type="evidence" value="ECO:0007669"/>
    <property type="project" value="UniProtKB-SubCell"/>
</dbReference>
<dbReference type="GO" id="GO:0003677">
    <property type="term" value="F:DNA binding"/>
    <property type="evidence" value="ECO:0007669"/>
    <property type="project" value="UniProtKB-KW"/>
</dbReference>
<dbReference type="Gene3D" id="1.10.10.10">
    <property type="entry name" value="Winged helix-like DNA-binding domain superfamily/Winged helix DNA-binding domain"/>
    <property type="match status" value="1"/>
</dbReference>
<dbReference type="InterPro" id="IPR036388">
    <property type="entry name" value="WH-like_DNA-bd_sf"/>
</dbReference>
<dbReference type="InterPro" id="IPR036390">
    <property type="entry name" value="WH_DNA-bd_sf"/>
</dbReference>
<dbReference type="PANTHER" id="PTHR43712:SF15">
    <property type="entry name" value="MONODICTYPHENONE CLUSTER TRANSCRIPTIONAL COACTIVATOR MDPA"/>
    <property type="match status" value="1"/>
</dbReference>
<dbReference type="PANTHER" id="PTHR43712">
    <property type="entry name" value="PUTATIVE (AFU_ORTHOLOGUE AFUA_4G14580)-RELATED"/>
    <property type="match status" value="1"/>
</dbReference>
<dbReference type="SUPFAM" id="SSF46785">
    <property type="entry name" value="Winged helix' DNA-binding domain"/>
    <property type="match status" value="1"/>
</dbReference>
<gene>
    <name evidence="2" type="primary">ptaR1</name>
    <name type="ORF">PFICI_10832</name>
</gene>
<feature type="chain" id="PRO_0000443052" description="Pestheic acid cluster transcriptional regulator 1">
    <location>
        <begin position="1"/>
        <end position="418"/>
    </location>
</feature>
<feature type="region of interest" description="Disordered" evidence="1">
    <location>
        <begin position="244"/>
        <end position="272"/>
    </location>
</feature>
<feature type="compositionally biased region" description="Low complexity" evidence="1">
    <location>
        <begin position="245"/>
        <end position="260"/>
    </location>
</feature>
<proteinExistence type="predicted"/>